<comment type="function">
    <text>Produces ATP from ADP in the presence of a proton gradient across the membrane. The alpha chain is a regulatory subunit.</text>
</comment>
<comment type="catalytic activity">
    <reaction evidence="1">
        <text>ATP + H2O + 4 H(+)(in) = ADP + phosphate + 5 H(+)(out)</text>
        <dbReference type="Rhea" id="RHEA:57720"/>
        <dbReference type="ChEBI" id="CHEBI:15377"/>
        <dbReference type="ChEBI" id="CHEBI:15378"/>
        <dbReference type="ChEBI" id="CHEBI:30616"/>
        <dbReference type="ChEBI" id="CHEBI:43474"/>
        <dbReference type="ChEBI" id="CHEBI:456216"/>
        <dbReference type="EC" id="7.1.2.2"/>
    </reaction>
</comment>
<comment type="subunit">
    <text evidence="1">F-type ATPases have 2 components, CF(1) - the catalytic core - and CF(0) - the membrane proton channel. CF(1) has five subunits: alpha(3), beta(3), gamma(1), delta(1), epsilon(1). CF(0) has three main subunits: a(1), b(2) and c(9-12). The alpha and beta chains form an alternating ring which encloses part of the gamma chain. CF(1) is attached to CF(0) by a central stalk formed by the gamma and epsilon chains, while a peripheral stalk is formed by the delta and b chains.</text>
</comment>
<comment type="subcellular location">
    <subcellularLocation>
        <location evidence="1">Cell inner membrane</location>
        <topology evidence="1">Peripheral membrane protein</topology>
    </subcellularLocation>
</comment>
<comment type="similarity">
    <text evidence="1">Belongs to the ATPase alpha/beta chains family.</text>
</comment>
<name>ATPA_VIBAL</name>
<evidence type="ECO:0000255" key="1">
    <source>
        <dbReference type="HAMAP-Rule" id="MF_01346"/>
    </source>
</evidence>
<sequence length="513" mass="55591">MQLNSTEISDLIKQRIESFEVVSEARNEGTIVSVSDGIIRIHGLADVMQGEMIELPGGRYALALNLERDSVGAVVMGPYADLKEGMKVTGTGRILEVPVGPELLGRVVNTLGEPIDGKGPIEAKMTSPVEVIAPGVIDRKSVDQPVQTGYKSVDSMIPIGRGQRELIIGDRQIGKTALAIDAIINQKDSGIFSIYVAIGQKASTIANVVRKLEEHGALQNTIVVVASASESAALQYLAPYAGCAMGEYFRDRGEDALIVYDDLSKQAVAYRQISLLLKRPPGREAFPGDVFYLHSRLLERAARVNEEYVERFTNGEVKGKTGSLTALPIIETQAGDVSAFVPTNVISITDGQIFLQTELFNAGVRPAVDPGISVSRVGGSAQTKIIKKLSGGIRTALAAYRELAAFAQFSSDLDEATKKQLDHGQKVTELMKQKQYAPMSVFDQALTIFAAERGYLDDVELNKVLDFEAALLSYARGQYAELAAEIDKSGAYNDEIEAQLKKLTDDFKATQTW</sequence>
<proteinExistence type="evidence at protein level"/>
<dbReference type="EC" id="7.1.2.2" evidence="1"/>
<dbReference type="EMBL" id="X16050">
    <property type="protein sequence ID" value="CAA34179.1"/>
    <property type="molecule type" value="Genomic_DNA"/>
</dbReference>
<dbReference type="PIR" id="S06080">
    <property type="entry name" value="S06080"/>
</dbReference>
<dbReference type="SMR" id="P12985"/>
<dbReference type="STRING" id="663.BAU10_15090"/>
<dbReference type="eggNOG" id="COG0056">
    <property type="taxonomic scope" value="Bacteria"/>
</dbReference>
<dbReference type="GO" id="GO:0005886">
    <property type="term" value="C:plasma membrane"/>
    <property type="evidence" value="ECO:0007669"/>
    <property type="project" value="UniProtKB-SubCell"/>
</dbReference>
<dbReference type="GO" id="GO:0045259">
    <property type="term" value="C:proton-transporting ATP synthase complex"/>
    <property type="evidence" value="ECO:0007669"/>
    <property type="project" value="UniProtKB-KW"/>
</dbReference>
<dbReference type="GO" id="GO:0043531">
    <property type="term" value="F:ADP binding"/>
    <property type="evidence" value="ECO:0007669"/>
    <property type="project" value="TreeGrafter"/>
</dbReference>
<dbReference type="GO" id="GO:0005524">
    <property type="term" value="F:ATP binding"/>
    <property type="evidence" value="ECO:0007669"/>
    <property type="project" value="UniProtKB-UniRule"/>
</dbReference>
<dbReference type="GO" id="GO:0046933">
    <property type="term" value="F:proton-transporting ATP synthase activity, rotational mechanism"/>
    <property type="evidence" value="ECO:0007669"/>
    <property type="project" value="UniProtKB-UniRule"/>
</dbReference>
<dbReference type="CDD" id="cd18113">
    <property type="entry name" value="ATP-synt_F1_alpha_C"/>
    <property type="match status" value="1"/>
</dbReference>
<dbReference type="CDD" id="cd18116">
    <property type="entry name" value="ATP-synt_F1_alpha_N"/>
    <property type="match status" value="1"/>
</dbReference>
<dbReference type="CDD" id="cd01132">
    <property type="entry name" value="F1-ATPase_alpha_CD"/>
    <property type="match status" value="1"/>
</dbReference>
<dbReference type="FunFam" id="1.20.150.20:FF:000001">
    <property type="entry name" value="ATP synthase subunit alpha"/>
    <property type="match status" value="1"/>
</dbReference>
<dbReference type="FunFam" id="2.40.30.20:FF:000001">
    <property type="entry name" value="ATP synthase subunit alpha"/>
    <property type="match status" value="1"/>
</dbReference>
<dbReference type="FunFam" id="3.40.50.300:FF:000002">
    <property type="entry name" value="ATP synthase subunit alpha"/>
    <property type="match status" value="1"/>
</dbReference>
<dbReference type="Gene3D" id="2.40.30.20">
    <property type="match status" value="1"/>
</dbReference>
<dbReference type="Gene3D" id="1.20.150.20">
    <property type="entry name" value="ATP synthase alpha/beta chain, C-terminal domain"/>
    <property type="match status" value="1"/>
</dbReference>
<dbReference type="Gene3D" id="3.40.50.300">
    <property type="entry name" value="P-loop containing nucleotide triphosphate hydrolases"/>
    <property type="match status" value="1"/>
</dbReference>
<dbReference type="HAMAP" id="MF_01346">
    <property type="entry name" value="ATP_synth_alpha_bact"/>
    <property type="match status" value="1"/>
</dbReference>
<dbReference type="InterPro" id="IPR023366">
    <property type="entry name" value="ATP_synth_asu-like_sf"/>
</dbReference>
<dbReference type="InterPro" id="IPR000793">
    <property type="entry name" value="ATP_synth_asu_C"/>
</dbReference>
<dbReference type="InterPro" id="IPR038376">
    <property type="entry name" value="ATP_synth_asu_C_sf"/>
</dbReference>
<dbReference type="InterPro" id="IPR033732">
    <property type="entry name" value="ATP_synth_F1_a_nt-bd_dom"/>
</dbReference>
<dbReference type="InterPro" id="IPR005294">
    <property type="entry name" value="ATP_synth_F1_asu"/>
</dbReference>
<dbReference type="InterPro" id="IPR020003">
    <property type="entry name" value="ATPase_a/bsu_AS"/>
</dbReference>
<dbReference type="InterPro" id="IPR004100">
    <property type="entry name" value="ATPase_F1/V1/A1_a/bsu_N"/>
</dbReference>
<dbReference type="InterPro" id="IPR036121">
    <property type="entry name" value="ATPase_F1/V1/A1_a/bsu_N_sf"/>
</dbReference>
<dbReference type="InterPro" id="IPR000194">
    <property type="entry name" value="ATPase_F1/V1/A1_a/bsu_nucl-bd"/>
</dbReference>
<dbReference type="InterPro" id="IPR027417">
    <property type="entry name" value="P-loop_NTPase"/>
</dbReference>
<dbReference type="NCBIfam" id="TIGR00962">
    <property type="entry name" value="atpA"/>
    <property type="match status" value="1"/>
</dbReference>
<dbReference type="NCBIfam" id="NF009884">
    <property type="entry name" value="PRK13343.1"/>
    <property type="match status" value="1"/>
</dbReference>
<dbReference type="PANTHER" id="PTHR48082">
    <property type="entry name" value="ATP SYNTHASE SUBUNIT ALPHA, MITOCHONDRIAL"/>
    <property type="match status" value="1"/>
</dbReference>
<dbReference type="PANTHER" id="PTHR48082:SF2">
    <property type="entry name" value="ATP SYNTHASE SUBUNIT ALPHA, MITOCHONDRIAL"/>
    <property type="match status" value="1"/>
</dbReference>
<dbReference type="Pfam" id="PF00006">
    <property type="entry name" value="ATP-synt_ab"/>
    <property type="match status" value="1"/>
</dbReference>
<dbReference type="Pfam" id="PF00306">
    <property type="entry name" value="ATP-synt_ab_C"/>
    <property type="match status" value="1"/>
</dbReference>
<dbReference type="Pfam" id="PF02874">
    <property type="entry name" value="ATP-synt_ab_N"/>
    <property type="match status" value="1"/>
</dbReference>
<dbReference type="SUPFAM" id="SSF47917">
    <property type="entry name" value="C-terminal domain of alpha and beta subunits of F1 ATP synthase"/>
    <property type="match status" value="1"/>
</dbReference>
<dbReference type="SUPFAM" id="SSF50615">
    <property type="entry name" value="N-terminal domain of alpha and beta subunits of F1 ATP synthase"/>
    <property type="match status" value="1"/>
</dbReference>
<dbReference type="SUPFAM" id="SSF52540">
    <property type="entry name" value="P-loop containing nucleoside triphosphate hydrolases"/>
    <property type="match status" value="1"/>
</dbReference>
<dbReference type="PROSITE" id="PS00152">
    <property type="entry name" value="ATPASE_ALPHA_BETA"/>
    <property type="match status" value="1"/>
</dbReference>
<organism>
    <name type="scientific">Vibrio alginolyticus</name>
    <dbReference type="NCBI Taxonomy" id="663"/>
    <lineage>
        <taxon>Bacteria</taxon>
        <taxon>Pseudomonadati</taxon>
        <taxon>Pseudomonadota</taxon>
        <taxon>Gammaproteobacteria</taxon>
        <taxon>Vibrionales</taxon>
        <taxon>Vibrionaceae</taxon>
        <taxon>Vibrio</taxon>
    </lineage>
</organism>
<feature type="chain" id="PRO_0000144364" description="ATP synthase subunit alpha">
    <location>
        <begin position="1"/>
        <end position="513"/>
    </location>
</feature>
<feature type="binding site" evidence="1">
    <location>
        <begin position="169"/>
        <end position="176"/>
    </location>
    <ligand>
        <name>ATP</name>
        <dbReference type="ChEBI" id="CHEBI:30616"/>
    </ligand>
</feature>
<feature type="site" description="Required for activity">
    <location>
        <position position="373"/>
    </location>
</feature>
<keyword id="KW-0066">ATP synthesis</keyword>
<keyword id="KW-0067">ATP-binding</keyword>
<keyword id="KW-0997">Cell inner membrane</keyword>
<keyword id="KW-1003">Cell membrane</keyword>
<keyword id="KW-0139">CF(1)</keyword>
<keyword id="KW-0903">Direct protein sequencing</keyword>
<keyword id="KW-0375">Hydrogen ion transport</keyword>
<keyword id="KW-0406">Ion transport</keyword>
<keyword id="KW-0472">Membrane</keyword>
<keyword id="KW-0547">Nucleotide-binding</keyword>
<keyword id="KW-1278">Translocase</keyword>
<keyword id="KW-0813">Transport</keyword>
<gene>
    <name evidence="1" type="primary">atpA</name>
    <name type="synonym">uncA</name>
</gene>
<accession>P12985</accession>
<reference key="1">
    <citation type="journal article" date="1989" name="Nucleic Acids Res.">
        <title>Nucleotide sequence of the unc operon of Vibrio alginolyticus.</title>
        <authorList>
            <person name="Krumholz L.R."/>
            <person name="Esser U."/>
            <person name="Simoni R.D."/>
        </authorList>
    </citation>
    <scope>NUCLEOTIDE SEQUENCE [GENOMIC DNA]</scope>
    <source>
        <strain>138-2</strain>
    </source>
</reference>
<reference key="2">
    <citation type="journal article" date="1989" name="FEBS Lett.">
        <title>The F1-ATPase of Vibrio alginolyticus. Purification and N-terminal sequence of major subunits.</title>
        <authorList>
            <person name="Dmitirev O.Y."/>
            <person name="Grinkevich V.A."/>
            <person name="Skulachev V.P."/>
        </authorList>
    </citation>
    <scope>PROTEIN SEQUENCE OF 1-19</scope>
    <source>
        <strain>138-2</strain>
    </source>
</reference>
<protein>
    <recommendedName>
        <fullName evidence="1">ATP synthase subunit alpha</fullName>
        <ecNumber evidence="1">7.1.2.2</ecNumber>
    </recommendedName>
    <alternativeName>
        <fullName evidence="1">ATP synthase F1 sector subunit alpha</fullName>
    </alternativeName>
    <alternativeName>
        <fullName evidence="1">F-ATPase subunit alpha</fullName>
    </alternativeName>
</protein>